<proteinExistence type="inferred from homology"/>
<dbReference type="EMBL" id="CP000468">
    <property type="protein sequence ID" value="ABJ02922.1"/>
    <property type="molecule type" value="Genomic_DNA"/>
</dbReference>
<dbReference type="RefSeq" id="WP_000572183.1">
    <property type="nucleotide sequence ID" value="NZ_CADILS010000078.1"/>
</dbReference>
<dbReference type="SMR" id="A1AGY2"/>
<dbReference type="GeneID" id="89518281"/>
<dbReference type="KEGG" id="ecv:APECO1_3008"/>
<dbReference type="HOGENOM" id="CLU_016047_1_1_6"/>
<dbReference type="Proteomes" id="UP000008216">
    <property type="component" value="Chromosome"/>
</dbReference>
<dbReference type="GO" id="GO:0005886">
    <property type="term" value="C:plasma membrane"/>
    <property type="evidence" value="ECO:0007669"/>
    <property type="project" value="UniProtKB-SubCell"/>
</dbReference>
<dbReference type="GO" id="GO:0055085">
    <property type="term" value="P:transmembrane transport"/>
    <property type="evidence" value="ECO:0007669"/>
    <property type="project" value="InterPro"/>
</dbReference>
<dbReference type="CDD" id="cd06261">
    <property type="entry name" value="TM_PBP2"/>
    <property type="match status" value="1"/>
</dbReference>
<dbReference type="FunFam" id="1.10.3720.10:FF:000042">
    <property type="entry name" value="sn-glycerol-3-phosphate transport system permease protein UgpE"/>
    <property type="match status" value="1"/>
</dbReference>
<dbReference type="Gene3D" id="1.10.3720.10">
    <property type="entry name" value="MetI-like"/>
    <property type="match status" value="1"/>
</dbReference>
<dbReference type="InterPro" id="IPR000515">
    <property type="entry name" value="MetI-like"/>
</dbReference>
<dbReference type="InterPro" id="IPR035906">
    <property type="entry name" value="MetI-like_sf"/>
</dbReference>
<dbReference type="NCBIfam" id="NF008210">
    <property type="entry name" value="PRK10973.1"/>
    <property type="match status" value="1"/>
</dbReference>
<dbReference type="PANTHER" id="PTHR43744">
    <property type="entry name" value="ABC TRANSPORTER PERMEASE PROTEIN MG189-RELATED-RELATED"/>
    <property type="match status" value="1"/>
</dbReference>
<dbReference type="PANTHER" id="PTHR43744:SF8">
    <property type="entry name" value="SN-GLYCEROL-3-PHOSPHATE TRANSPORT SYSTEM PERMEASE PROTEIN UGPE"/>
    <property type="match status" value="1"/>
</dbReference>
<dbReference type="Pfam" id="PF00528">
    <property type="entry name" value="BPD_transp_1"/>
    <property type="match status" value="1"/>
</dbReference>
<dbReference type="SUPFAM" id="SSF161098">
    <property type="entry name" value="MetI-like"/>
    <property type="match status" value="1"/>
</dbReference>
<dbReference type="PROSITE" id="PS50928">
    <property type="entry name" value="ABC_TM1"/>
    <property type="match status" value="1"/>
</dbReference>
<protein>
    <recommendedName>
        <fullName evidence="1">sn-glycerol-3-phosphate transport system permease protein UgpE</fullName>
    </recommendedName>
</protein>
<accession>A1AGY2</accession>
<evidence type="ECO:0000250" key="1">
    <source>
        <dbReference type="UniProtKB" id="P10906"/>
    </source>
</evidence>
<evidence type="ECO:0000255" key="2"/>
<evidence type="ECO:0000255" key="3">
    <source>
        <dbReference type="PROSITE-ProRule" id="PRU00441"/>
    </source>
</evidence>
<evidence type="ECO:0000305" key="4"/>
<comment type="function">
    <text evidence="1">Part of the ABC transporter complex UgpBAEC involved in sn-glycerol-3-phosphate (G3P) import. Probably responsible for the translocation of the substrate across the membrane.</text>
</comment>
<comment type="subunit">
    <text evidence="1">The complex is composed of two ATP-binding proteins (UgpC), two transmembrane proteins (UgpA and UgpE) and a solute-binding protein (UgpB).</text>
</comment>
<comment type="subcellular location">
    <subcellularLocation>
        <location evidence="1">Cell inner membrane</location>
        <topology evidence="2">Multi-pass membrane protein</topology>
    </subcellularLocation>
</comment>
<comment type="similarity">
    <text evidence="4">Belongs to the binding-protein-dependent transport system permease family. UgpAE subfamily.</text>
</comment>
<gene>
    <name type="primary">ugpE</name>
    <name type="ordered locus">Ecok1_34280</name>
    <name type="ORF">APECO1_3008</name>
</gene>
<keyword id="KW-0997">Cell inner membrane</keyword>
<keyword id="KW-1003">Cell membrane</keyword>
<keyword id="KW-0472">Membrane</keyword>
<keyword id="KW-1185">Reference proteome</keyword>
<keyword id="KW-0812">Transmembrane</keyword>
<keyword id="KW-1133">Transmembrane helix</keyword>
<keyword id="KW-0813">Transport</keyword>
<sequence>MIENRPWLTIFSHTMLILGIAVILFPLYVAFVAATLDKQEVYAAPMTLIPGTHLLENIHNIWVNGVGTNSAPFWRMLLNSFVMAFSITLGKITVSMLSAFAIVWFRFPLRNLFFWMIFITLMLPVEVRIFPTVEVIANLKMLDSYAGLTLPLMASATATFLFRQFFMTLPDELVEAARIDGASPMRFFCDIVFPLSKTNLAALFVITFIYGWNQYLWPLLIITDVDLGTTVAGIKGMIATGEGTTEWNSVMAAMLLTLIPPVVIVLVMQRAFVRGLVDSEK</sequence>
<reference key="1">
    <citation type="journal article" date="2007" name="J. Bacteriol.">
        <title>The genome sequence of avian pathogenic Escherichia coli strain O1:K1:H7 shares strong similarities with human extraintestinal pathogenic E. coli genomes.</title>
        <authorList>
            <person name="Johnson T.J."/>
            <person name="Kariyawasam S."/>
            <person name="Wannemuehler Y."/>
            <person name="Mangiamele P."/>
            <person name="Johnson S.J."/>
            <person name="Doetkott C."/>
            <person name="Skyberg J.A."/>
            <person name="Lynne A.M."/>
            <person name="Johnson J.R."/>
            <person name="Nolan L.K."/>
        </authorList>
    </citation>
    <scope>NUCLEOTIDE SEQUENCE [LARGE SCALE GENOMIC DNA]</scope>
</reference>
<organism>
    <name type="scientific">Escherichia coli O1:K1 / APEC</name>
    <dbReference type="NCBI Taxonomy" id="405955"/>
    <lineage>
        <taxon>Bacteria</taxon>
        <taxon>Pseudomonadati</taxon>
        <taxon>Pseudomonadota</taxon>
        <taxon>Gammaproteobacteria</taxon>
        <taxon>Enterobacterales</taxon>
        <taxon>Enterobacteriaceae</taxon>
        <taxon>Escherichia</taxon>
    </lineage>
</organism>
<name>UGPE_ECOK1</name>
<feature type="chain" id="PRO_0000292676" description="sn-glycerol-3-phosphate transport system permease protein UgpE">
    <location>
        <begin position="1"/>
        <end position="281"/>
    </location>
</feature>
<feature type="transmembrane region" description="Helical" evidence="3">
    <location>
        <begin position="16"/>
        <end position="36"/>
    </location>
</feature>
<feature type="transmembrane region" description="Helical" evidence="3">
    <location>
        <begin position="85"/>
        <end position="105"/>
    </location>
</feature>
<feature type="transmembrane region" description="Helical" evidence="3">
    <location>
        <begin position="113"/>
        <end position="133"/>
    </location>
</feature>
<feature type="transmembrane region" description="Helical" evidence="3">
    <location>
        <begin position="142"/>
        <end position="162"/>
    </location>
</feature>
<feature type="transmembrane region" description="Helical" evidence="3">
    <location>
        <begin position="202"/>
        <end position="222"/>
    </location>
</feature>
<feature type="transmembrane region" description="Helical" evidence="3">
    <location>
        <begin position="247"/>
        <end position="267"/>
    </location>
</feature>
<feature type="domain" description="ABC transmembrane type-1" evidence="3">
    <location>
        <begin position="77"/>
        <end position="268"/>
    </location>
</feature>